<gene>
    <name evidence="4 5" type="primary">alaA</name>
    <name evidence="4" type="synonym">yfbQ</name>
    <name type="ordered locus">b2290</name>
    <name type="ordered locus">JW2287</name>
</gene>
<keyword id="KW-0002">3D-structure</keyword>
<keyword id="KW-0028">Amino-acid biosynthesis</keyword>
<keyword id="KW-0032">Aminotransferase</keyword>
<keyword id="KW-0963">Cytoplasm</keyword>
<keyword id="KW-0663">Pyridoxal phosphate</keyword>
<keyword id="KW-1185">Reference proteome</keyword>
<keyword id="KW-0808">Transferase</keyword>
<organism>
    <name type="scientific">Escherichia coli (strain K12)</name>
    <dbReference type="NCBI Taxonomy" id="83333"/>
    <lineage>
        <taxon>Bacteria</taxon>
        <taxon>Pseudomonadati</taxon>
        <taxon>Pseudomonadota</taxon>
        <taxon>Gammaproteobacteria</taxon>
        <taxon>Enterobacterales</taxon>
        <taxon>Enterobacteriaceae</taxon>
        <taxon>Escherichia</taxon>
    </lineage>
</organism>
<name>ALAA_ECOLI</name>
<feature type="chain" id="PRO_0000123866" description="Glutamate-pyruvate aminotransferase AlaA">
    <location>
        <begin position="1"/>
        <end position="405"/>
    </location>
</feature>
<feature type="binding site" evidence="8 9">
    <location>
        <position position="41"/>
    </location>
    <ligand>
        <name>L-alanine</name>
        <dbReference type="ChEBI" id="CHEBI:57972"/>
    </ligand>
</feature>
<feature type="binding site" evidence="8 9">
    <location>
        <position position="179"/>
    </location>
    <ligand>
        <name>L-alanine</name>
        <dbReference type="ChEBI" id="CHEBI:57972"/>
    </ligand>
</feature>
<feature type="binding site" evidence="8 9">
    <location>
        <position position="378"/>
    </location>
    <ligand>
        <name>L-alanine</name>
        <dbReference type="ChEBI" id="CHEBI:57972"/>
    </ligand>
</feature>
<feature type="modified residue" description="N6-(pyridoxal phosphate)lysine" evidence="3 9">
    <location>
        <position position="240"/>
    </location>
</feature>
<feature type="helix" evidence="10">
    <location>
        <begin position="8"/>
        <end position="10"/>
    </location>
</feature>
<feature type="helix" evidence="10">
    <location>
        <begin position="20"/>
        <end position="30"/>
    </location>
</feature>
<feature type="helix" evidence="10">
    <location>
        <begin position="44"/>
        <end position="46"/>
    </location>
</feature>
<feature type="helix" evidence="10">
    <location>
        <begin position="52"/>
        <end position="61"/>
    </location>
</feature>
<feature type="helix" evidence="10">
    <location>
        <begin position="62"/>
        <end position="64"/>
    </location>
</feature>
<feature type="helix" evidence="10">
    <location>
        <begin position="75"/>
        <end position="86"/>
    </location>
</feature>
<feature type="turn" evidence="10">
    <location>
        <begin position="87"/>
        <end position="89"/>
    </location>
</feature>
<feature type="helix" evidence="10">
    <location>
        <begin position="95"/>
        <end position="97"/>
    </location>
</feature>
<feature type="strand" evidence="10">
    <location>
        <begin position="98"/>
        <end position="103"/>
    </location>
</feature>
<feature type="helix" evidence="10">
    <location>
        <begin position="104"/>
        <end position="113"/>
    </location>
</feature>
<feature type="strand" evidence="10">
    <location>
        <begin position="121"/>
        <end position="127"/>
    </location>
</feature>
<feature type="helix" evidence="10">
    <location>
        <begin position="130"/>
        <end position="138"/>
    </location>
</feature>
<feature type="strand" evidence="10">
    <location>
        <begin position="142"/>
        <end position="148"/>
    </location>
</feature>
<feature type="helix" evidence="10">
    <location>
        <begin position="150"/>
        <end position="152"/>
    </location>
</feature>
<feature type="helix" evidence="10">
    <location>
        <begin position="158"/>
        <end position="163"/>
    </location>
</feature>
<feature type="strand" evidence="10">
    <location>
        <begin position="169"/>
        <end position="177"/>
    </location>
</feature>
<feature type="turn" evidence="10">
    <location>
        <begin position="179"/>
        <end position="181"/>
    </location>
</feature>
<feature type="helix" evidence="10">
    <location>
        <begin position="187"/>
        <end position="199"/>
    </location>
</feature>
<feature type="strand" evidence="10">
    <location>
        <begin position="203"/>
        <end position="207"/>
    </location>
</feature>
<feature type="turn" evidence="10">
    <location>
        <begin position="209"/>
        <end position="212"/>
    </location>
</feature>
<feature type="helix" evidence="10">
    <location>
        <begin position="223"/>
        <end position="226"/>
    </location>
</feature>
<feature type="strand" evidence="10">
    <location>
        <begin position="232"/>
        <end position="238"/>
    </location>
</feature>
<feature type="turn" evidence="10">
    <location>
        <begin position="239"/>
        <end position="242"/>
    </location>
</feature>
<feature type="helix" evidence="10">
    <location>
        <begin position="245"/>
        <end position="247"/>
    </location>
</feature>
<feature type="strand" evidence="10">
    <location>
        <begin position="250"/>
        <end position="256"/>
    </location>
</feature>
<feature type="helix" evidence="10">
    <location>
        <begin position="259"/>
        <end position="261"/>
    </location>
</feature>
<feature type="helix" evidence="10">
    <location>
        <begin position="262"/>
        <end position="274"/>
    </location>
</feature>
<feature type="helix" evidence="10">
    <location>
        <begin position="281"/>
        <end position="284"/>
    </location>
</feature>
<feature type="helix" evidence="10">
    <location>
        <begin position="285"/>
        <end position="290"/>
    </location>
</feature>
<feature type="helix" evidence="10">
    <location>
        <begin position="297"/>
        <end position="300"/>
    </location>
</feature>
<feature type="helix" evidence="10">
    <location>
        <begin position="305"/>
        <end position="319"/>
    </location>
</feature>
<feature type="strand" evidence="10">
    <location>
        <begin position="329"/>
        <end position="334"/>
    </location>
</feature>
<feature type="helix" evidence="10">
    <location>
        <begin position="340"/>
        <end position="343"/>
    </location>
</feature>
<feature type="helix" evidence="10">
    <location>
        <begin position="348"/>
        <end position="359"/>
    </location>
</feature>
<feature type="strand" evidence="10">
    <location>
        <begin position="360"/>
        <end position="362"/>
    </location>
</feature>
<feature type="helix" evidence="10">
    <location>
        <begin position="366"/>
        <end position="369"/>
    </location>
</feature>
<feature type="strand" evidence="10">
    <location>
        <begin position="372"/>
        <end position="380"/>
    </location>
</feature>
<feature type="helix" evidence="10">
    <location>
        <begin position="385"/>
        <end position="400"/>
    </location>
</feature>
<proteinExistence type="evidence at protein level"/>
<evidence type="ECO:0000250" key="1"/>
<evidence type="ECO:0000269" key="2">
    <source>
    </source>
</evidence>
<evidence type="ECO:0000269" key="3">
    <source>
    </source>
</evidence>
<evidence type="ECO:0000303" key="4">
    <source>
    </source>
</evidence>
<evidence type="ECO:0000303" key="5">
    <source>
    </source>
</evidence>
<evidence type="ECO:0000305" key="6"/>
<evidence type="ECO:0000305" key="7">
    <source>
    </source>
</evidence>
<evidence type="ECO:0000305" key="8">
    <source>
    </source>
</evidence>
<evidence type="ECO:0007744" key="9">
    <source>
        <dbReference type="PDB" id="4CVQ"/>
    </source>
</evidence>
<evidence type="ECO:0007829" key="10">
    <source>
        <dbReference type="PDB" id="4CVQ"/>
    </source>
</evidence>
<protein>
    <recommendedName>
        <fullName>Glutamate-pyruvate aminotransferase AlaA</fullName>
        <ecNumber evidence="2">2.6.1.2</ecNumber>
    </recommendedName>
</protein>
<dbReference type="EC" id="2.6.1.2" evidence="2"/>
<dbReference type="EMBL" id="U00096">
    <property type="protein sequence ID" value="AAC75350.1"/>
    <property type="molecule type" value="Genomic_DNA"/>
</dbReference>
<dbReference type="EMBL" id="AP009048">
    <property type="protein sequence ID" value="BAA16127.1"/>
    <property type="molecule type" value="Genomic_DNA"/>
</dbReference>
<dbReference type="PIR" id="H65000">
    <property type="entry name" value="H65000"/>
</dbReference>
<dbReference type="RefSeq" id="NP_416793.1">
    <property type="nucleotide sequence ID" value="NC_000913.3"/>
</dbReference>
<dbReference type="RefSeq" id="WP_000074527.1">
    <property type="nucleotide sequence ID" value="NZ_STEB01000008.1"/>
</dbReference>
<dbReference type="PDB" id="4CVQ">
    <property type="method" value="X-ray"/>
    <property type="resolution" value="2.11 A"/>
    <property type="chains" value="A/B=1-405"/>
</dbReference>
<dbReference type="PDBsum" id="4CVQ"/>
<dbReference type="SMR" id="P0A959"/>
<dbReference type="BioGRID" id="4262970">
    <property type="interactions" value="19"/>
</dbReference>
<dbReference type="DIP" id="DIP-11970N"/>
<dbReference type="FunCoup" id="P0A959">
    <property type="interactions" value="511"/>
</dbReference>
<dbReference type="IntAct" id="P0A959">
    <property type="interactions" value="11"/>
</dbReference>
<dbReference type="STRING" id="511145.b2290"/>
<dbReference type="jPOST" id="P0A959"/>
<dbReference type="PaxDb" id="511145-b2290"/>
<dbReference type="EnsemblBacteria" id="AAC75350">
    <property type="protein sequence ID" value="AAC75350"/>
    <property type="gene ID" value="b2290"/>
</dbReference>
<dbReference type="GeneID" id="93774884"/>
<dbReference type="GeneID" id="946772"/>
<dbReference type="KEGG" id="ecj:JW2287"/>
<dbReference type="KEGG" id="eco:b2290"/>
<dbReference type="KEGG" id="ecoc:C3026_12775"/>
<dbReference type="PATRIC" id="fig|1411691.4.peg.4445"/>
<dbReference type="EchoBASE" id="EB3854"/>
<dbReference type="eggNOG" id="COG0436">
    <property type="taxonomic scope" value="Bacteria"/>
</dbReference>
<dbReference type="HOGENOM" id="CLU_017584_4_2_6"/>
<dbReference type="InParanoid" id="P0A959"/>
<dbReference type="OMA" id="CALDLCI"/>
<dbReference type="OrthoDB" id="9803354at2"/>
<dbReference type="PhylomeDB" id="P0A959"/>
<dbReference type="BioCyc" id="EcoCyc:G7184-MONOMER"/>
<dbReference type="BioCyc" id="MetaCyc:G7184-MONOMER"/>
<dbReference type="BRENDA" id="2.6.1.2">
    <property type="organism ID" value="2026"/>
</dbReference>
<dbReference type="SABIO-RK" id="P0A959"/>
<dbReference type="UniPathway" id="UPA00133"/>
<dbReference type="EvolutionaryTrace" id="P0A959"/>
<dbReference type="PRO" id="PR:P0A959"/>
<dbReference type="Proteomes" id="UP000000625">
    <property type="component" value="Chromosome"/>
</dbReference>
<dbReference type="GO" id="GO:0005737">
    <property type="term" value="C:cytoplasm"/>
    <property type="evidence" value="ECO:0007669"/>
    <property type="project" value="UniProtKB-SubCell"/>
</dbReference>
<dbReference type="GO" id="GO:0004021">
    <property type="term" value="F:L-alanine:2-oxoglutarate aminotransferase activity"/>
    <property type="evidence" value="ECO:0000314"/>
    <property type="project" value="UniProtKB"/>
</dbReference>
<dbReference type="GO" id="GO:0042803">
    <property type="term" value="F:protein homodimerization activity"/>
    <property type="evidence" value="ECO:0000314"/>
    <property type="project" value="EcoCyc"/>
</dbReference>
<dbReference type="GO" id="GO:0030170">
    <property type="term" value="F:pyridoxal phosphate binding"/>
    <property type="evidence" value="ECO:0000314"/>
    <property type="project" value="EcoCyc"/>
</dbReference>
<dbReference type="GO" id="GO:0008483">
    <property type="term" value="F:transaminase activity"/>
    <property type="evidence" value="ECO:0000315"/>
    <property type="project" value="EcoliWiki"/>
</dbReference>
<dbReference type="GO" id="GO:0006523">
    <property type="term" value="P:alanine biosynthetic process"/>
    <property type="evidence" value="ECO:0000315"/>
    <property type="project" value="EcoliWiki"/>
</dbReference>
<dbReference type="GO" id="GO:0030632">
    <property type="term" value="P:D-alanine biosynthetic process"/>
    <property type="evidence" value="ECO:0000315"/>
    <property type="project" value="UniProtKB"/>
</dbReference>
<dbReference type="GO" id="GO:0006974">
    <property type="term" value="P:DNA damage response"/>
    <property type="evidence" value="ECO:0000315"/>
    <property type="project" value="EcoCyc"/>
</dbReference>
<dbReference type="GO" id="GO:0019272">
    <property type="term" value="P:L-alanine biosynthetic process from pyruvate"/>
    <property type="evidence" value="ECO:0000315"/>
    <property type="project" value="EcoCyc"/>
</dbReference>
<dbReference type="GO" id="GO:0046677">
    <property type="term" value="P:response to antibiotic"/>
    <property type="evidence" value="ECO:0000315"/>
    <property type="project" value="EcoCyc"/>
</dbReference>
<dbReference type="CDD" id="cd00609">
    <property type="entry name" value="AAT_like"/>
    <property type="match status" value="1"/>
</dbReference>
<dbReference type="FunFam" id="3.40.640.10:FF:000019">
    <property type="entry name" value="Pyridoxal phosphate-dependent aminotransferase"/>
    <property type="match status" value="1"/>
</dbReference>
<dbReference type="Gene3D" id="3.90.1150.10">
    <property type="entry name" value="Aspartate Aminotransferase, domain 1"/>
    <property type="match status" value="1"/>
</dbReference>
<dbReference type="Gene3D" id="3.40.640.10">
    <property type="entry name" value="Type I PLP-dependent aspartate aminotransferase-like (Major domain)"/>
    <property type="match status" value="1"/>
</dbReference>
<dbReference type="InterPro" id="IPR051926">
    <property type="entry name" value="Ala_Aminotransferase"/>
</dbReference>
<dbReference type="InterPro" id="IPR004839">
    <property type="entry name" value="Aminotransferase_I/II_large"/>
</dbReference>
<dbReference type="InterPro" id="IPR015424">
    <property type="entry name" value="PyrdxlP-dep_Trfase"/>
</dbReference>
<dbReference type="InterPro" id="IPR015421">
    <property type="entry name" value="PyrdxlP-dep_Trfase_major"/>
</dbReference>
<dbReference type="InterPro" id="IPR015422">
    <property type="entry name" value="PyrdxlP-dep_Trfase_small"/>
</dbReference>
<dbReference type="PANTHER" id="PTHR43488">
    <property type="entry name" value="GLUTAMATE-PYRUVATE AMINOTRANSFERASE ALAA"/>
    <property type="match status" value="1"/>
</dbReference>
<dbReference type="PANTHER" id="PTHR43488:SF2">
    <property type="entry name" value="GLUTAMATE-PYRUVATE AMINOTRANSFERASE ALAA"/>
    <property type="match status" value="1"/>
</dbReference>
<dbReference type="Pfam" id="PF00155">
    <property type="entry name" value="Aminotran_1_2"/>
    <property type="match status" value="1"/>
</dbReference>
<dbReference type="SUPFAM" id="SSF53383">
    <property type="entry name" value="PLP-dependent transferases"/>
    <property type="match status" value="1"/>
</dbReference>
<sequence length="405" mass="45517">MSPIEKSSKLENVCYDIRGPVLKEAKRLEEEGNKVLKLNIGNPAPFGFDAPDEILVDVIRNLPTAQGYCDSKGLYSARKAIMQHYQARGMRDVTVEDIYIGNGVSELIVQAMQALLNSGDEMLVPAPDYPLWTAAVSLSSGKAVHYLCDESSDWFPDLDDIRAKITPRTRGIVIINPNNPTGAVYSKELLMEIVEIARQHNLIIFADEIYDKILYDDAEHHSIAPLAPDLLTITFNGLSKTYRVAGFRQGWMVLNGPKKHAKGYIEGLEMLASMRLCANVPAQHAIQTALGGYQSISEFITPGGRLYEQRNRAWELINDIPGVSCVKPRGALYMFPKIDAKRFNIHDDQKMVLDFLLQEKVLLVQGTAFNWPWPDHFRIVTLPRVDDIELSLSKFARFLSGYHQL</sequence>
<accession>P0A959</accession>
<accession>P77727</accession>
<reference key="1">
    <citation type="journal article" date="1997" name="DNA Res.">
        <title>Construction of a contiguous 874-kb sequence of the Escherichia coli-K12 genome corresponding to 50.0-68.8 min on the linkage map and analysis of its sequence features.</title>
        <authorList>
            <person name="Yamamoto Y."/>
            <person name="Aiba H."/>
            <person name="Baba T."/>
            <person name="Hayashi K."/>
            <person name="Inada T."/>
            <person name="Isono K."/>
            <person name="Itoh T."/>
            <person name="Kimura S."/>
            <person name="Kitagawa M."/>
            <person name="Makino K."/>
            <person name="Miki T."/>
            <person name="Mitsuhashi N."/>
            <person name="Mizobuchi K."/>
            <person name="Mori H."/>
            <person name="Nakade S."/>
            <person name="Nakamura Y."/>
            <person name="Nashimoto H."/>
            <person name="Oshima T."/>
            <person name="Oyama S."/>
            <person name="Saito N."/>
            <person name="Sampei G."/>
            <person name="Satoh Y."/>
            <person name="Sivasundaram S."/>
            <person name="Tagami H."/>
            <person name="Takahashi H."/>
            <person name="Takeda J."/>
            <person name="Takemoto K."/>
            <person name="Uehara K."/>
            <person name="Wada C."/>
            <person name="Yamagata S."/>
            <person name="Horiuchi T."/>
        </authorList>
    </citation>
    <scope>NUCLEOTIDE SEQUENCE [LARGE SCALE GENOMIC DNA]</scope>
    <source>
        <strain>K12 / W3110 / ATCC 27325 / DSM 5911</strain>
    </source>
</reference>
<reference key="2">
    <citation type="journal article" date="1997" name="Science">
        <title>The complete genome sequence of Escherichia coli K-12.</title>
        <authorList>
            <person name="Blattner F.R."/>
            <person name="Plunkett G. III"/>
            <person name="Bloch C.A."/>
            <person name="Perna N.T."/>
            <person name="Burland V."/>
            <person name="Riley M."/>
            <person name="Collado-Vides J."/>
            <person name="Glasner J.D."/>
            <person name="Rode C.K."/>
            <person name="Mayhew G.F."/>
            <person name="Gregor J."/>
            <person name="Davis N.W."/>
            <person name="Kirkpatrick H.A."/>
            <person name="Goeden M.A."/>
            <person name="Rose D.J."/>
            <person name="Mau B."/>
            <person name="Shao Y."/>
        </authorList>
    </citation>
    <scope>NUCLEOTIDE SEQUENCE [LARGE SCALE GENOMIC DNA]</scope>
    <source>
        <strain>K12 / MG1655 / ATCC 47076</strain>
    </source>
</reference>
<reference key="3">
    <citation type="journal article" date="2006" name="Mol. Syst. Biol.">
        <title>Highly accurate genome sequences of Escherichia coli K-12 strains MG1655 and W3110.</title>
        <authorList>
            <person name="Hayashi K."/>
            <person name="Morooka N."/>
            <person name="Yamamoto Y."/>
            <person name="Fujita K."/>
            <person name="Isono K."/>
            <person name="Choi S."/>
            <person name="Ohtsubo E."/>
            <person name="Baba T."/>
            <person name="Wanner B.L."/>
            <person name="Mori H."/>
            <person name="Horiuchi T."/>
        </authorList>
    </citation>
    <scope>NUCLEOTIDE SEQUENCE [LARGE SCALE GENOMIC DNA]</scope>
    <source>
        <strain>K12 / W3110 / ATCC 27325 / DSM 5911</strain>
    </source>
</reference>
<reference key="4">
    <citation type="journal article" date="2010" name="J. Bacteriol.">
        <title>Genetics and regulation of the major enzymes of alanine synthesis in Escherichia coli.</title>
        <authorList>
            <person name="Kim S.H."/>
            <person name="Schneider B.L."/>
            <person name="Reitzer L."/>
        </authorList>
    </citation>
    <scope>FUNCTION IN ALANINE BIOSYNTHESIS</scope>
    <scope>CATALYTIC ACTIVITY</scope>
    <scope>BIOPHYSICOCHEMICAL PROPERTIES</scope>
    <scope>SUBUNIT</scope>
    <scope>INDUCTION</scope>
    <scope>NOMENCLATURE</scope>
</reference>
<reference evidence="9" key="5">
    <citation type="journal article" date="2014" name="PLoS ONE">
        <title>Structural analysis and mutant growth properties reveal distinctive enzymatic and cellular roles for the three major L-alanine transaminases of Escherichia coli.</title>
        <authorList>
            <person name="Pena-Soler E."/>
            <person name="Fernandez F.J."/>
            <person name="Lopez-Estepa M."/>
            <person name="Garces F."/>
            <person name="Richardson A.J."/>
            <person name="Quintana J.F."/>
            <person name="Rudd K.E."/>
            <person name="Coll M."/>
            <person name="Vega M.C."/>
        </authorList>
    </citation>
    <scope>X-RAY CRYSTALLOGRAPHY (2.11 ANGSTROMS) IN COMPLEX WITH PYRIDOXAL PHOSPHATE AND A SUBSTRATE-MIMICKING ACETATE MOLECULE</scope>
    <scope>SUBUNIT</scope>
    <scope>COFACTOR</scope>
</reference>
<comment type="function">
    <text evidence="2">Involved in the biosynthesis of alanine. Catalyzes the transamination of pyruvate by glutamate, leading to the formation of L-alanine and 2-oxoglutarate. Is also able to catalyze the reverse reaction.</text>
</comment>
<comment type="catalytic activity">
    <reaction evidence="2">
        <text>L-alanine + 2-oxoglutarate = pyruvate + L-glutamate</text>
        <dbReference type="Rhea" id="RHEA:19453"/>
        <dbReference type="ChEBI" id="CHEBI:15361"/>
        <dbReference type="ChEBI" id="CHEBI:16810"/>
        <dbReference type="ChEBI" id="CHEBI:29985"/>
        <dbReference type="ChEBI" id="CHEBI:57972"/>
        <dbReference type="EC" id="2.6.1.2"/>
    </reaction>
    <physiologicalReaction direction="right-to-left" evidence="2">
        <dbReference type="Rhea" id="RHEA:19455"/>
    </physiologicalReaction>
</comment>
<comment type="cofactor">
    <cofactor evidence="3 7">
        <name>pyridoxal 5'-phosphate</name>
        <dbReference type="ChEBI" id="CHEBI:597326"/>
    </cofactor>
</comment>
<comment type="biophysicochemical properties">
    <kinetics>
        <KM evidence="2">0.55 mM for pyruvate (at 37 degrees Celsius and pH 8.5)</KM>
        <KM evidence="2">4.9 mM for alanine (at 37 degrees Celsius and pH 8.5)</KM>
    </kinetics>
</comment>
<comment type="pathway">
    <text evidence="2">Amino-acid biosynthesis; L-alanine biosynthesis.</text>
</comment>
<comment type="subunit">
    <text evidence="2 3">Homodimer.</text>
</comment>
<comment type="subcellular location">
    <subcellularLocation>
        <location evidence="1">Cytoplasm</location>
    </subcellularLocation>
</comment>
<comment type="induction">
    <text evidence="2">Modestly repressed by alanine and leucine via Lrp.</text>
</comment>
<comment type="similarity">
    <text evidence="6">Belongs to the class-I pyridoxal-phosphate-dependent aminotransferase family.</text>
</comment>